<keyword id="KW-0067">ATP-binding</keyword>
<keyword id="KW-0963">Cytoplasm</keyword>
<keyword id="KW-0227">DNA damage</keyword>
<keyword id="KW-0234">DNA repair</keyword>
<keyword id="KW-0235">DNA replication</keyword>
<keyword id="KW-0238">DNA-binding</keyword>
<keyword id="KW-0547">Nucleotide-binding</keyword>
<keyword id="KW-0742">SOS response</keyword>
<proteinExistence type="inferred from homology"/>
<organism>
    <name type="scientific">Xanthomonas euvesicatoria pv. vesicatoria (strain 85-10)</name>
    <name type="common">Xanthomonas campestris pv. vesicatoria</name>
    <dbReference type="NCBI Taxonomy" id="316273"/>
    <lineage>
        <taxon>Bacteria</taxon>
        <taxon>Pseudomonadati</taxon>
        <taxon>Pseudomonadota</taxon>
        <taxon>Gammaproteobacteria</taxon>
        <taxon>Lysobacterales</taxon>
        <taxon>Lysobacteraceae</taxon>
        <taxon>Xanthomonas</taxon>
    </lineage>
</organism>
<reference key="1">
    <citation type="journal article" date="2005" name="J. Bacteriol.">
        <title>Insights into genome plasticity and pathogenicity of the plant pathogenic Bacterium Xanthomonas campestris pv. vesicatoria revealed by the complete genome sequence.</title>
        <authorList>
            <person name="Thieme F."/>
            <person name="Koebnik R."/>
            <person name="Bekel T."/>
            <person name="Berger C."/>
            <person name="Boch J."/>
            <person name="Buettner D."/>
            <person name="Caldana C."/>
            <person name="Gaigalat L."/>
            <person name="Goesmann A."/>
            <person name="Kay S."/>
            <person name="Kirchner O."/>
            <person name="Lanz C."/>
            <person name="Linke B."/>
            <person name="McHardy A.C."/>
            <person name="Meyer F."/>
            <person name="Mittenhuber G."/>
            <person name="Nies D.H."/>
            <person name="Niesbach-Kloesgen U."/>
            <person name="Patschkowski T."/>
            <person name="Rueckert C."/>
            <person name="Rupp O."/>
            <person name="Schneiker S."/>
            <person name="Schuster S.C."/>
            <person name="Vorhoelter F.J."/>
            <person name="Weber E."/>
            <person name="Puehler A."/>
            <person name="Bonas U."/>
            <person name="Bartels D."/>
            <person name="Kaiser O."/>
        </authorList>
    </citation>
    <scope>NUCLEOTIDE SEQUENCE [LARGE SCALE GENOMIC DNA]</scope>
    <source>
        <strain>85-10</strain>
    </source>
</reference>
<comment type="function">
    <text evidence="1">The RecF protein is involved in DNA metabolism; it is required for DNA replication and normal SOS inducibility. RecF binds preferentially to single-stranded, linear DNA. It also seems to bind ATP.</text>
</comment>
<comment type="subcellular location">
    <subcellularLocation>
        <location evidence="1">Cytoplasm</location>
    </subcellularLocation>
</comment>
<comment type="similarity">
    <text evidence="1">Belongs to the RecF family.</text>
</comment>
<gene>
    <name evidence="1" type="primary">recF</name>
    <name type="ordered locus">XCV0003</name>
</gene>
<feature type="chain" id="PRO_0000236162" description="DNA replication and repair protein RecF">
    <location>
        <begin position="1"/>
        <end position="368"/>
    </location>
</feature>
<feature type="binding site" evidence="1">
    <location>
        <begin position="30"/>
        <end position="37"/>
    </location>
    <ligand>
        <name>ATP</name>
        <dbReference type="ChEBI" id="CHEBI:30616"/>
    </ligand>
</feature>
<dbReference type="EMBL" id="AM039952">
    <property type="protein sequence ID" value="CAJ21634.1"/>
    <property type="molecule type" value="Genomic_DNA"/>
</dbReference>
<dbReference type="RefSeq" id="WP_011345770.1">
    <property type="nucleotide sequence ID" value="NZ_CP017190.1"/>
</dbReference>
<dbReference type="SMR" id="Q3BZS9"/>
<dbReference type="STRING" id="456327.BJD11_22935"/>
<dbReference type="KEGG" id="xcv:XCV0003"/>
<dbReference type="eggNOG" id="COG1195">
    <property type="taxonomic scope" value="Bacteria"/>
</dbReference>
<dbReference type="HOGENOM" id="CLU_040267_0_0_6"/>
<dbReference type="Proteomes" id="UP000007069">
    <property type="component" value="Chromosome"/>
</dbReference>
<dbReference type="GO" id="GO:0005737">
    <property type="term" value="C:cytoplasm"/>
    <property type="evidence" value="ECO:0007669"/>
    <property type="project" value="UniProtKB-SubCell"/>
</dbReference>
<dbReference type="GO" id="GO:0005524">
    <property type="term" value="F:ATP binding"/>
    <property type="evidence" value="ECO:0007669"/>
    <property type="project" value="UniProtKB-UniRule"/>
</dbReference>
<dbReference type="GO" id="GO:0003697">
    <property type="term" value="F:single-stranded DNA binding"/>
    <property type="evidence" value="ECO:0007669"/>
    <property type="project" value="UniProtKB-UniRule"/>
</dbReference>
<dbReference type="GO" id="GO:0006260">
    <property type="term" value="P:DNA replication"/>
    <property type="evidence" value="ECO:0007669"/>
    <property type="project" value="UniProtKB-UniRule"/>
</dbReference>
<dbReference type="GO" id="GO:0000731">
    <property type="term" value="P:DNA synthesis involved in DNA repair"/>
    <property type="evidence" value="ECO:0007669"/>
    <property type="project" value="TreeGrafter"/>
</dbReference>
<dbReference type="GO" id="GO:0006302">
    <property type="term" value="P:double-strand break repair"/>
    <property type="evidence" value="ECO:0007669"/>
    <property type="project" value="TreeGrafter"/>
</dbReference>
<dbReference type="GO" id="GO:0009432">
    <property type="term" value="P:SOS response"/>
    <property type="evidence" value="ECO:0007669"/>
    <property type="project" value="UniProtKB-UniRule"/>
</dbReference>
<dbReference type="FunFam" id="1.20.1050.90:FF:000006">
    <property type="entry name" value="DNA replication and repair protein RecF"/>
    <property type="match status" value="1"/>
</dbReference>
<dbReference type="Gene3D" id="3.40.50.300">
    <property type="entry name" value="P-loop containing nucleotide triphosphate hydrolases"/>
    <property type="match status" value="1"/>
</dbReference>
<dbReference type="Gene3D" id="1.20.1050.90">
    <property type="entry name" value="RecF/RecN/SMC, N-terminal domain"/>
    <property type="match status" value="1"/>
</dbReference>
<dbReference type="HAMAP" id="MF_00365">
    <property type="entry name" value="RecF"/>
    <property type="match status" value="1"/>
</dbReference>
<dbReference type="InterPro" id="IPR001238">
    <property type="entry name" value="DNA-binding_RecF"/>
</dbReference>
<dbReference type="InterPro" id="IPR018078">
    <property type="entry name" value="DNA-binding_RecF_CS"/>
</dbReference>
<dbReference type="InterPro" id="IPR027417">
    <property type="entry name" value="P-loop_NTPase"/>
</dbReference>
<dbReference type="InterPro" id="IPR003395">
    <property type="entry name" value="RecF/RecN/SMC_N"/>
</dbReference>
<dbReference type="InterPro" id="IPR042174">
    <property type="entry name" value="RecF_2"/>
</dbReference>
<dbReference type="NCBIfam" id="TIGR00611">
    <property type="entry name" value="recf"/>
    <property type="match status" value="1"/>
</dbReference>
<dbReference type="PANTHER" id="PTHR32182">
    <property type="entry name" value="DNA REPLICATION AND REPAIR PROTEIN RECF"/>
    <property type="match status" value="1"/>
</dbReference>
<dbReference type="PANTHER" id="PTHR32182:SF0">
    <property type="entry name" value="DNA REPLICATION AND REPAIR PROTEIN RECF"/>
    <property type="match status" value="1"/>
</dbReference>
<dbReference type="Pfam" id="PF02463">
    <property type="entry name" value="SMC_N"/>
    <property type="match status" value="1"/>
</dbReference>
<dbReference type="SUPFAM" id="SSF52540">
    <property type="entry name" value="P-loop containing nucleoside triphosphate hydrolases"/>
    <property type="match status" value="1"/>
</dbReference>
<dbReference type="PROSITE" id="PS00617">
    <property type="entry name" value="RECF_1"/>
    <property type="match status" value="1"/>
</dbReference>
<dbReference type="PROSITE" id="PS00618">
    <property type="entry name" value="RECF_2"/>
    <property type="match status" value="1"/>
</dbReference>
<sequence length="368" mass="40752">MHVVRLSIHRLRRFHTVELHPSSTLNLLTGDNGAGKTSVLEALHLMAYGRSFRGRVRDGLIQQGANDLEVFVEWKEGNGAAGERTRRAGLRHRGQEWTGRLDGEDVAQLGALCAALAVVTFEPGSHVLISGGGEPRRRFLDWGLFHVEPDFLTMWRRYARALKQRNALLKQGAQPRMLDAWDHELAESGESLTSRRTRYLERLQERLVPVADAIAPALGLSALTFAPGWKRHEVSLADALLLARERDRQNGYTSQGPHRADWVPSFQALPGRDALSRGQAKLTALACLLAQAEDFAYERGEWPVIALDDLGSELDRHHQGRVLQRLASAPAQVLITATETPPGLADAGALLQQFHVEHGHITRQAAAH</sequence>
<evidence type="ECO:0000255" key="1">
    <source>
        <dbReference type="HAMAP-Rule" id="MF_00365"/>
    </source>
</evidence>
<accession>Q3BZS9</accession>
<protein>
    <recommendedName>
        <fullName evidence="1">DNA replication and repair protein RecF</fullName>
    </recommendedName>
</protein>
<name>RECF_XANE5</name>